<dbReference type="EMBL" id="CU468135">
    <property type="protein sequence ID" value="CAO97518.1"/>
    <property type="molecule type" value="Genomic_DNA"/>
</dbReference>
<dbReference type="RefSeq" id="WP_012442184.1">
    <property type="nucleotide sequence ID" value="NC_010694.1"/>
</dbReference>
<dbReference type="SMR" id="B2VCL6"/>
<dbReference type="STRING" id="465817.ETA_24720"/>
<dbReference type="KEGG" id="eta:ETA_24720"/>
<dbReference type="eggNOG" id="COG0353">
    <property type="taxonomic scope" value="Bacteria"/>
</dbReference>
<dbReference type="HOGENOM" id="CLU_060739_1_2_6"/>
<dbReference type="OrthoDB" id="9802672at2"/>
<dbReference type="Proteomes" id="UP000001726">
    <property type="component" value="Chromosome"/>
</dbReference>
<dbReference type="GO" id="GO:0003677">
    <property type="term" value="F:DNA binding"/>
    <property type="evidence" value="ECO:0007669"/>
    <property type="project" value="UniProtKB-UniRule"/>
</dbReference>
<dbReference type="GO" id="GO:0008270">
    <property type="term" value="F:zinc ion binding"/>
    <property type="evidence" value="ECO:0007669"/>
    <property type="project" value="UniProtKB-KW"/>
</dbReference>
<dbReference type="GO" id="GO:0006310">
    <property type="term" value="P:DNA recombination"/>
    <property type="evidence" value="ECO:0007669"/>
    <property type="project" value="UniProtKB-UniRule"/>
</dbReference>
<dbReference type="GO" id="GO:0006281">
    <property type="term" value="P:DNA repair"/>
    <property type="evidence" value="ECO:0007669"/>
    <property type="project" value="UniProtKB-UniRule"/>
</dbReference>
<dbReference type="CDD" id="cd01025">
    <property type="entry name" value="TOPRIM_recR"/>
    <property type="match status" value="1"/>
</dbReference>
<dbReference type="FunFam" id="1.10.8.420:FF:000001">
    <property type="entry name" value="Recombination protein RecR"/>
    <property type="match status" value="1"/>
</dbReference>
<dbReference type="FunFam" id="3.40.1360.10:FF:000001">
    <property type="entry name" value="Recombination protein RecR"/>
    <property type="match status" value="1"/>
</dbReference>
<dbReference type="Gene3D" id="3.40.1360.10">
    <property type="match status" value="1"/>
</dbReference>
<dbReference type="Gene3D" id="6.10.250.240">
    <property type="match status" value="1"/>
</dbReference>
<dbReference type="Gene3D" id="1.10.8.420">
    <property type="entry name" value="RecR Domain 1"/>
    <property type="match status" value="1"/>
</dbReference>
<dbReference type="HAMAP" id="MF_00017">
    <property type="entry name" value="RecR"/>
    <property type="match status" value="1"/>
</dbReference>
<dbReference type="InterPro" id="IPR000093">
    <property type="entry name" value="DNA_Rcmb_RecR"/>
</dbReference>
<dbReference type="InterPro" id="IPR023627">
    <property type="entry name" value="Rcmb_RecR"/>
</dbReference>
<dbReference type="InterPro" id="IPR015967">
    <property type="entry name" value="Rcmb_RecR_Znf"/>
</dbReference>
<dbReference type="InterPro" id="IPR006171">
    <property type="entry name" value="TOPRIM_dom"/>
</dbReference>
<dbReference type="InterPro" id="IPR034137">
    <property type="entry name" value="TOPRIM_RecR"/>
</dbReference>
<dbReference type="NCBIfam" id="TIGR00615">
    <property type="entry name" value="recR"/>
    <property type="match status" value="1"/>
</dbReference>
<dbReference type="PANTHER" id="PTHR30446">
    <property type="entry name" value="RECOMBINATION PROTEIN RECR"/>
    <property type="match status" value="1"/>
</dbReference>
<dbReference type="PANTHER" id="PTHR30446:SF0">
    <property type="entry name" value="RECOMBINATION PROTEIN RECR"/>
    <property type="match status" value="1"/>
</dbReference>
<dbReference type="Pfam" id="PF21175">
    <property type="entry name" value="RecR_C"/>
    <property type="match status" value="1"/>
</dbReference>
<dbReference type="Pfam" id="PF21176">
    <property type="entry name" value="RecR_HhH"/>
    <property type="match status" value="1"/>
</dbReference>
<dbReference type="Pfam" id="PF02132">
    <property type="entry name" value="RecR_ZnF"/>
    <property type="match status" value="1"/>
</dbReference>
<dbReference type="Pfam" id="PF13662">
    <property type="entry name" value="Toprim_4"/>
    <property type="match status" value="1"/>
</dbReference>
<dbReference type="SMART" id="SM00493">
    <property type="entry name" value="TOPRIM"/>
    <property type="match status" value="1"/>
</dbReference>
<dbReference type="SUPFAM" id="SSF111304">
    <property type="entry name" value="Recombination protein RecR"/>
    <property type="match status" value="1"/>
</dbReference>
<dbReference type="PROSITE" id="PS01300">
    <property type="entry name" value="RECR"/>
    <property type="match status" value="1"/>
</dbReference>
<dbReference type="PROSITE" id="PS50880">
    <property type="entry name" value="TOPRIM"/>
    <property type="match status" value="1"/>
</dbReference>
<organism>
    <name type="scientific">Erwinia tasmaniensis (strain DSM 17950 / CFBP 7177 / CIP 109463 / NCPPB 4357 / Et1/99)</name>
    <dbReference type="NCBI Taxonomy" id="465817"/>
    <lineage>
        <taxon>Bacteria</taxon>
        <taxon>Pseudomonadati</taxon>
        <taxon>Pseudomonadota</taxon>
        <taxon>Gammaproteobacteria</taxon>
        <taxon>Enterobacterales</taxon>
        <taxon>Erwiniaceae</taxon>
        <taxon>Erwinia</taxon>
    </lineage>
</organism>
<evidence type="ECO:0000255" key="1">
    <source>
        <dbReference type="HAMAP-Rule" id="MF_00017"/>
    </source>
</evidence>
<feature type="chain" id="PRO_1000089728" description="Recombination protein RecR">
    <location>
        <begin position="1"/>
        <end position="201"/>
    </location>
</feature>
<feature type="domain" description="Toprim" evidence="1">
    <location>
        <begin position="81"/>
        <end position="176"/>
    </location>
</feature>
<feature type="zinc finger region" description="C4-type" evidence="1">
    <location>
        <begin position="57"/>
        <end position="72"/>
    </location>
</feature>
<accession>B2VCL6</accession>
<reference key="1">
    <citation type="journal article" date="2008" name="Environ. Microbiol.">
        <title>The genome of Erwinia tasmaniensis strain Et1/99, a non-pathogenic bacterium in the genus Erwinia.</title>
        <authorList>
            <person name="Kube M."/>
            <person name="Migdoll A.M."/>
            <person name="Mueller I."/>
            <person name="Kuhl H."/>
            <person name="Beck A."/>
            <person name="Reinhardt R."/>
            <person name="Geider K."/>
        </authorList>
    </citation>
    <scope>NUCLEOTIDE SEQUENCE [LARGE SCALE GENOMIC DNA]</scope>
    <source>
        <strain>DSM 17950 / CFBP 7177 / CIP 109463 / NCPPB 4357 / Et1/99</strain>
    </source>
</reference>
<protein>
    <recommendedName>
        <fullName evidence="1">Recombination protein RecR</fullName>
    </recommendedName>
</protein>
<proteinExistence type="inferred from homology"/>
<name>RECR_ERWT9</name>
<sequence>MQTSPLLETLMESLRCLPGVGPKSAQRMAFQLLQRDRSGGMRLAQALTRAMSEIGHCADCRTFTEQEICTICANPRRQHNGLICVVESPADIHAIEQTGQFSGRYFVLMGHLSPLDGIGPGDIGLDRLEQRLETESIQEVILATNPTVEGEATANYIASLCEQYGVDASRIAHGVPVGGELEMVDGTTLSHSLAGRQKFKF</sequence>
<keyword id="KW-0227">DNA damage</keyword>
<keyword id="KW-0233">DNA recombination</keyword>
<keyword id="KW-0234">DNA repair</keyword>
<keyword id="KW-0479">Metal-binding</keyword>
<keyword id="KW-1185">Reference proteome</keyword>
<keyword id="KW-0862">Zinc</keyword>
<keyword id="KW-0863">Zinc-finger</keyword>
<gene>
    <name evidence="1" type="primary">recR</name>
    <name type="ordered locus">ETA_24720</name>
</gene>
<comment type="function">
    <text evidence="1">May play a role in DNA repair. It seems to be involved in an RecBC-independent recombinational process of DNA repair. It may act with RecF and RecO.</text>
</comment>
<comment type="similarity">
    <text evidence="1">Belongs to the RecR family.</text>
</comment>